<accession>Q83QT9</accession>
<accession>Q7UC64</accession>
<feature type="chain" id="PRO_0000110029" description="UDP-4-amino-4-deoxy-L-arabinose--oxoglutarate aminotransferase">
    <location>
        <begin position="1"/>
        <end position="379"/>
    </location>
</feature>
<feature type="modified residue" description="N6-(pyridoxal phosphate)lysine" evidence="1">
    <location>
        <position position="182"/>
    </location>
</feature>
<name>ARNB_SHIFL</name>
<organism>
    <name type="scientific">Shigella flexneri</name>
    <dbReference type="NCBI Taxonomy" id="623"/>
    <lineage>
        <taxon>Bacteria</taxon>
        <taxon>Pseudomonadati</taxon>
        <taxon>Pseudomonadota</taxon>
        <taxon>Gammaproteobacteria</taxon>
        <taxon>Enterobacterales</taxon>
        <taxon>Enterobacteriaceae</taxon>
        <taxon>Shigella</taxon>
    </lineage>
</organism>
<dbReference type="EC" id="2.6.1.87" evidence="1"/>
<dbReference type="EMBL" id="AE005674">
    <property type="protein sequence ID" value="AAN43846.2"/>
    <property type="status" value="ALT_INIT"/>
    <property type="molecule type" value="Genomic_DNA"/>
</dbReference>
<dbReference type="EMBL" id="AE014073">
    <property type="protein sequence ID" value="AAP17665.1"/>
    <property type="status" value="ALT_INIT"/>
    <property type="molecule type" value="Genomic_DNA"/>
</dbReference>
<dbReference type="RefSeq" id="NP_708139.4">
    <property type="nucleotide sequence ID" value="NC_004337.2"/>
</dbReference>
<dbReference type="RefSeq" id="WP_001379974.1">
    <property type="nucleotide sequence ID" value="NZ_WPGW01000032.1"/>
</dbReference>
<dbReference type="SMR" id="Q83QT9"/>
<dbReference type="STRING" id="198214.SF2332"/>
<dbReference type="PaxDb" id="198214-SF2332"/>
<dbReference type="GeneID" id="1025891"/>
<dbReference type="KEGG" id="sfl:SF2332"/>
<dbReference type="KEGG" id="sfx:S2465"/>
<dbReference type="PATRIC" id="fig|198214.7.peg.2794"/>
<dbReference type="HOGENOM" id="CLU_033332_0_3_6"/>
<dbReference type="UniPathway" id="UPA00030"/>
<dbReference type="UniPathway" id="UPA00032">
    <property type="reaction ID" value="UER00493"/>
</dbReference>
<dbReference type="Proteomes" id="UP000001006">
    <property type="component" value="Chromosome"/>
</dbReference>
<dbReference type="Proteomes" id="UP000002673">
    <property type="component" value="Chromosome"/>
</dbReference>
<dbReference type="GO" id="GO:0016020">
    <property type="term" value="C:membrane"/>
    <property type="evidence" value="ECO:0007669"/>
    <property type="project" value="GOC"/>
</dbReference>
<dbReference type="GO" id="GO:0030170">
    <property type="term" value="F:pyridoxal phosphate binding"/>
    <property type="evidence" value="ECO:0007669"/>
    <property type="project" value="TreeGrafter"/>
</dbReference>
<dbReference type="GO" id="GO:0099620">
    <property type="term" value="F:UDP-4-amino-4-deoxy-L-arabinose aminotransferase"/>
    <property type="evidence" value="ECO:0007669"/>
    <property type="project" value="UniProtKB-EC"/>
</dbReference>
<dbReference type="GO" id="GO:0009245">
    <property type="term" value="P:lipid A biosynthetic process"/>
    <property type="evidence" value="ECO:0007669"/>
    <property type="project" value="UniProtKB-KW"/>
</dbReference>
<dbReference type="GO" id="GO:0009103">
    <property type="term" value="P:lipopolysaccharide biosynthetic process"/>
    <property type="evidence" value="ECO:0007669"/>
    <property type="project" value="UniProtKB-UniRule"/>
</dbReference>
<dbReference type="GO" id="GO:0046677">
    <property type="term" value="P:response to antibiotic"/>
    <property type="evidence" value="ECO:0007669"/>
    <property type="project" value="UniProtKB-KW"/>
</dbReference>
<dbReference type="CDD" id="cd00616">
    <property type="entry name" value="AHBA_syn"/>
    <property type="match status" value="1"/>
</dbReference>
<dbReference type="FunFam" id="3.40.640.10:FF:000040">
    <property type="entry name" value="UDP-4-amino-4-deoxy-L-arabinose--oxoglutarate aminotransferase"/>
    <property type="match status" value="1"/>
</dbReference>
<dbReference type="FunFam" id="3.90.1150.10:FF:000030">
    <property type="entry name" value="UDP-4-amino-4-deoxy-L-arabinose--oxoglutarate aminotransferase"/>
    <property type="match status" value="1"/>
</dbReference>
<dbReference type="Gene3D" id="3.90.1150.10">
    <property type="entry name" value="Aspartate Aminotransferase, domain 1"/>
    <property type="match status" value="1"/>
</dbReference>
<dbReference type="Gene3D" id="3.40.640.10">
    <property type="entry name" value="Type I PLP-dependent aspartate aminotransferase-like (Major domain)"/>
    <property type="match status" value="1"/>
</dbReference>
<dbReference type="HAMAP" id="MF_01167">
    <property type="entry name" value="ArnB_transfer"/>
    <property type="match status" value="1"/>
</dbReference>
<dbReference type="InterPro" id="IPR022850">
    <property type="entry name" value="ArnB_NH2Trfase"/>
</dbReference>
<dbReference type="InterPro" id="IPR000653">
    <property type="entry name" value="DegT/StrS_aminotransferase"/>
</dbReference>
<dbReference type="InterPro" id="IPR015424">
    <property type="entry name" value="PyrdxlP-dep_Trfase"/>
</dbReference>
<dbReference type="InterPro" id="IPR015421">
    <property type="entry name" value="PyrdxlP-dep_Trfase_major"/>
</dbReference>
<dbReference type="InterPro" id="IPR015422">
    <property type="entry name" value="PyrdxlP-dep_Trfase_small"/>
</dbReference>
<dbReference type="NCBIfam" id="NF008658">
    <property type="entry name" value="PRK11658.1"/>
    <property type="match status" value="1"/>
</dbReference>
<dbReference type="PANTHER" id="PTHR30244">
    <property type="entry name" value="TRANSAMINASE"/>
    <property type="match status" value="1"/>
</dbReference>
<dbReference type="PANTHER" id="PTHR30244:SF41">
    <property type="entry name" value="UDP-4-AMINO-4-DEOXY-L-ARABINOSE--OXOGLUTARATE AMINOTRANSFERASE"/>
    <property type="match status" value="1"/>
</dbReference>
<dbReference type="Pfam" id="PF01041">
    <property type="entry name" value="DegT_DnrJ_EryC1"/>
    <property type="match status" value="1"/>
</dbReference>
<dbReference type="PIRSF" id="PIRSF000390">
    <property type="entry name" value="PLP_StrS"/>
    <property type="match status" value="1"/>
</dbReference>
<dbReference type="SUPFAM" id="SSF53383">
    <property type="entry name" value="PLP-dependent transferases"/>
    <property type="match status" value="1"/>
</dbReference>
<gene>
    <name evidence="1" type="primary">arnB</name>
    <name type="ordered locus">SF2332</name>
    <name type="ordered locus">S2465</name>
</gene>
<sequence length="379" mass="41670">MSEFLPFSRPAMGVEELAAVKEVLESGWITTGPKNQALEQAFCQLTGNQHAIAVSSATAGMHITLMALEIGKGDEVITPSLTWVSTLNMISLLGATPVMVDVDRDTLMVTPEAIESAITPRTKAIIPVHYAGAPADIDAIRAIGERYGIAVIEDAAHAVGTYYKGRHIGAKGTAIFSFHAIKNITCAEGGLIVTDNENLARQLRMLKFHGLGVDAYDRQTWGRAPQAEVLTPGYKYNLTDINAAIALTQLVKLEHLNTRRREIAQQYQQALAALPFQPLSLPAWPHVHAWHLFIIRVDEQRCGISRDALMEALKERGIGTGLHFRAAHTQKYYRERFPTLSLPNTEWNSERICSLPLFPDMTTADADRVITALQQLAGQ</sequence>
<keyword id="KW-0032">Aminotransferase</keyword>
<keyword id="KW-0046">Antibiotic resistance</keyword>
<keyword id="KW-0441">Lipid A biosynthesis</keyword>
<keyword id="KW-0444">Lipid biosynthesis</keyword>
<keyword id="KW-0443">Lipid metabolism</keyword>
<keyword id="KW-0448">Lipopolysaccharide biosynthesis</keyword>
<keyword id="KW-0663">Pyridoxal phosphate</keyword>
<keyword id="KW-1185">Reference proteome</keyword>
<keyword id="KW-0808">Transferase</keyword>
<proteinExistence type="inferred from homology"/>
<comment type="function">
    <text evidence="1">Catalyzes the conversion of UDP-4-keto-arabinose (UDP-Ara4O) to UDP-4-amino-4-deoxy-L-arabinose (UDP-L-Ara4N). The modified arabinose is attached to lipid A and is required for resistance to polymyxin and cationic antimicrobial peptides.</text>
</comment>
<comment type="catalytic activity">
    <reaction evidence="1">
        <text>UDP-4-amino-4-deoxy-beta-L-arabinose + 2-oxoglutarate = UDP-beta-L-threo-pentopyranos-4-ulose + L-glutamate</text>
        <dbReference type="Rhea" id="RHEA:24710"/>
        <dbReference type="ChEBI" id="CHEBI:16810"/>
        <dbReference type="ChEBI" id="CHEBI:29985"/>
        <dbReference type="ChEBI" id="CHEBI:58708"/>
        <dbReference type="ChEBI" id="CHEBI:58710"/>
        <dbReference type="EC" id="2.6.1.87"/>
    </reaction>
</comment>
<comment type="cofactor">
    <cofactor evidence="1">
        <name>pyridoxal 5'-phosphate</name>
        <dbReference type="ChEBI" id="CHEBI:597326"/>
    </cofactor>
</comment>
<comment type="pathway">
    <text evidence="1">Nucleotide-sugar biosynthesis; UDP-4-deoxy-4-formamido-beta-L-arabinose biosynthesis; UDP-4-deoxy-4-formamido-beta-L-arabinose from UDP-alpha-D-glucuronate: step 2/3.</text>
</comment>
<comment type="pathway">
    <text evidence="1">Bacterial outer membrane biogenesis; lipopolysaccharide biosynthesis.</text>
</comment>
<comment type="subunit">
    <text evidence="1">Homodimer.</text>
</comment>
<comment type="similarity">
    <text evidence="1">Belongs to the DegT/DnrJ/EryC1 family. ArnB subfamily.</text>
</comment>
<comment type="sequence caution" evidence="2">
    <conflict type="erroneous initiation">
        <sequence resource="EMBL-CDS" id="AAN43846"/>
    </conflict>
</comment>
<comment type="sequence caution" evidence="2">
    <conflict type="erroneous initiation">
        <sequence resource="EMBL-CDS" id="AAP17665"/>
    </conflict>
</comment>
<reference key="1">
    <citation type="journal article" date="2002" name="Nucleic Acids Res.">
        <title>Genome sequence of Shigella flexneri 2a: insights into pathogenicity through comparison with genomes of Escherichia coli K12 and O157.</title>
        <authorList>
            <person name="Jin Q."/>
            <person name="Yuan Z."/>
            <person name="Xu J."/>
            <person name="Wang Y."/>
            <person name="Shen Y."/>
            <person name="Lu W."/>
            <person name="Wang J."/>
            <person name="Liu H."/>
            <person name="Yang J."/>
            <person name="Yang F."/>
            <person name="Zhang X."/>
            <person name="Zhang J."/>
            <person name="Yang G."/>
            <person name="Wu H."/>
            <person name="Qu D."/>
            <person name="Dong J."/>
            <person name="Sun L."/>
            <person name="Xue Y."/>
            <person name="Zhao A."/>
            <person name="Gao Y."/>
            <person name="Zhu J."/>
            <person name="Kan B."/>
            <person name="Ding K."/>
            <person name="Chen S."/>
            <person name="Cheng H."/>
            <person name="Yao Z."/>
            <person name="He B."/>
            <person name="Chen R."/>
            <person name="Ma D."/>
            <person name="Qiang B."/>
            <person name="Wen Y."/>
            <person name="Hou Y."/>
            <person name="Yu J."/>
        </authorList>
    </citation>
    <scope>NUCLEOTIDE SEQUENCE [LARGE SCALE GENOMIC DNA]</scope>
    <source>
        <strain>301 / Serotype 2a</strain>
    </source>
</reference>
<reference key="2">
    <citation type="journal article" date="2003" name="Infect. Immun.">
        <title>Complete genome sequence and comparative genomics of Shigella flexneri serotype 2a strain 2457T.</title>
        <authorList>
            <person name="Wei J."/>
            <person name="Goldberg M.B."/>
            <person name="Burland V."/>
            <person name="Venkatesan M.M."/>
            <person name="Deng W."/>
            <person name="Fournier G."/>
            <person name="Mayhew G.F."/>
            <person name="Plunkett G. III"/>
            <person name="Rose D.J."/>
            <person name="Darling A."/>
            <person name="Mau B."/>
            <person name="Perna N.T."/>
            <person name="Payne S.M."/>
            <person name="Runyen-Janecky L.J."/>
            <person name="Zhou S."/>
            <person name="Schwartz D.C."/>
            <person name="Blattner F.R."/>
        </authorList>
    </citation>
    <scope>NUCLEOTIDE SEQUENCE [LARGE SCALE GENOMIC DNA]</scope>
    <source>
        <strain>ATCC 700930 / 2457T / Serotype 2a</strain>
    </source>
</reference>
<evidence type="ECO:0000255" key="1">
    <source>
        <dbReference type="HAMAP-Rule" id="MF_01167"/>
    </source>
</evidence>
<evidence type="ECO:0000305" key="2"/>
<protein>
    <recommendedName>
        <fullName evidence="1">UDP-4-amino-4-deoxy-L-arabinose--oxoglutarate aminotransferase</fullName>
        <ecNumber evidence="1">2.6.1.87</ecNumber>
    </recommendedName>
    <alternativeName>
        <fullName evidence="1">UDP-(beta-L-threo-pentapyranosyl-4''-ulose diphosphate) aminotransferase</fullName>
        <shortName evidence="1">UDP-Ara4O aminotransferase</shortName>
    </alternativeName>
    <alternativeName>
        <fullName evidence="1">UDP-4-amino-4-deoxy-L-arabinose aminotransferase</fullName>
    </alternativeName>
</protein>